<sequence>MLDLKRIRTDFDTVAAKLKNRGVSEDTLTHLKELDEKRRTLLVQSEELKAERNIASAAIAQAKRQKEDATQQIADMQKVSADIKTIDNQLVAIDQQVTDIITVLPNTPHDSVPVGADEEDNVEIRRWGTPRDFDFEVKAHWDLGEDLDILDWERGAKVTGARFLFYKNLGARLERALYNFMLDEHIKEGYQEIITPYMVNHDSMFGTGQYPKFKEDTFELADTNFVLIPTAEVPLTNYYRGEILDGKELPIYFTAMSPSFRSEAGSAGRDTRGLIRLHQFHKVEMVKFAKPEESYQELEKMTANAENILQKLGLPYRVISLCTGDMGFSAAKTYDLEVWIPAQNTYREISSCSNTEDFQARRAQIRYRDEADGKVKLLHTLNGSGLAVGRTVAAILENYQNEDGSVTIPEVLRPYMGGETVISPK</sequence>
<gene>
    <name evidence="1" type="primary">serS</name>
    <name type="ordered locus">MGAS10750_Spy1542</name>
</gene>
<dbReference type="EC" id="6.1.1.11" evidence="1"/>
<dbReference type="EMBL" id="CP000262">
    <property type="protein sequence ID" value="ABF38492.1"/>
    <property type="molecule type" value="Genomic_DNA"/>
</dbReference>
<dbReference type="SMR" id="Q1J594"/>
<dbReference type="KEGG" id="spi:MGAS10750_Spy1542"/>
<dbReference type="HOGENOM" id="CLU_023797_1_1_9"/>
<dbReference type="UniPathway" id="UPA00906">
    <property type="reaction ID" value="UER00895"/>
</dbReference>
<dbReference type="Proteomes" id="UP000002434">
    <property type="component" value="Chromosome"/>
</dbReference>
<dbReference type="GO" id="GO:0005737">
    <property type="term" value="C:cytoplasm"/>
    <property type="evidence" value="ECO:0007669"/>
    <property type="project" value="UniProtKB-SubCell"/>
</dbReference>
<dbReference type="GO" id="GO:0005524">
    <property type="term" value="F:ATP binding"/>
    <property type="evidence" value="ECO:0007669"/>
    <property type="project" value="UniProtKB-UniRule"/>
</dbReference>
<dbReference type="GO" id="GO:0140096">
    <property type="term" value="F:catalytic activity, acting on a protein"/>
    <property type="evidence" value="ECO:0007669"/>
    <property type="project" value="UniProtKB-ARBA"/>
</dbReference>
<dbReference type="GO" id="GO:0004828">
    <property type="term" value="F:serine-tRNA ligase activity"/>
    <property type="evidence" value="ECO:0007669"/>
    <property type="project" value="UniProtKB-UniRule"/>
</dbReference>
<dbReference type="GO" id="GO:0016740">
    <property type="term" value="F:transferase activity"/>
    <property type="evidence" value="ECO:0007669"/>
    <property type="project" value="UniProtKB-ARBA"/>
</dbReference>
<dbReference type="GO" id="GO:0016260">
    <property type="term" value="P:selenocysteine biosynthetic process"/>
    <property type="evidence" value="ECO:0007669"/>
    <property type="project" value="UniProtKB-UniRule"/>
</dbReference>
<dbReference type="GO" id="GO:0006434">
    <property type="term" value="P:seryl-tRNA aminoacylation"/>
    <property type="evidence" value="ECO:0007669"/>
    <property type="project" value="UniProtKB-UniRule"/>
</dbReference>
<dbReference type="CDD" id="cd00770">
    <property type="entry name" value="SerRS_core"/>
    <property type="match status" value="1"/>
</dbReference>
<dbReference type="Gene3D" id="3.30.930.10">
    <property type="entry name" value="Bira Bifunctional Protein, Domain 2"/>
    <property type="match status" value="1"/>
</dbReference>
<dbReference type="Gene3D" id="1.10.287.40">
    <property type="entry name" value="Serine-tRNA synthetase, tRNA binding domain"/>
    <property type="match status" value="1"/>
</dbReference>
<dbReference type="HAMAP" id="MF_00176">
    <property type="entry name" value="Ser_tRNA_synth_type1"/>
    <property type="match status" value="1"/>
</dbReference>
<dbReference type="InterPro" id="IPR002314">
    <property type="entry name" value="aa-tRNA-synt_IIb"/>
</dbReference>
<dbReference type="InterPro" id="IPR006195">
    <property type="entry name" value="aa-tRNA-synth_II"/>
</dbReference>
<dbReference type="InterPro" id="IPR045864">
    <property type="entry name" value="aa-tRNA-synth_II/BPL/LPL"/>
</dbReference>
<dbReference type="InterPro" id="IPR002317">
    <property type="entry name" value="Ser-tRNA-ligase_type_1"/>
</dbReference>
<dbReference type="InterPro" id="IPR015866">
    <property type="entry name" value="Ser-tRNA-synth_1_N"/>
</dbReference>
<dbReference type="InterPro" id="IPR042103">
    <property type="entry name" value="SerRS_1_N_sf"/>
</dbReference>
<dbReference type="InterPro" id="IPR033729">
    <property type="entry name" value="SerRS_core"/>
</dbReference>
<dbReference type="InterPro" id="IPR010978">
    <property type="entry name" value="tRNA-bd_arm"/>
</dbReference>
<dbReference type="NCBIfam" id="TIGR00414">
    <property type="entry name" value="serS"/>
    <property type="match status" value="1"/>
</dbReference>
<dbReference type="PANTHER" id="PTHR43697:SF1">
    <property type="entry name" value="SERINE--TRNA LIGASE"/>
    <property type="match status" value="1"/>
</dbReference>
<dbReference type="PANTHER" id="PTHR43697">
    <property type="entry name" value="SERYL-TRNA SYNTHETASE"/>
    <property type="match status" value="1"/>
</dbReference>
<dbReference type="Pfam" id="PF02403">
    <property type="entry name" value="Seryl_tRNA_N"/>
    <property type="match status" value="1"/>
</dbReference>
<dbReference type="Pfam" id="PF00587">
    <property type="entry name" value="tRNA-synt_2b"/>
    <property type="match status" value="1"/>
</dbReference>
<dbReference type="PIRSF" id="PIRSF001529">
    <property type="entry name" value="Ser-tRNA-synth_IIa"/>
    <property type="match status" value="1"/>
</dbReference>
<dbReference type="PRINTS" id="PR00981">
    <property type="entry name" value="TRNASYNTHSER"/>
</dbReference>
<dbReference type="SUPFAM" id="SSF55681">
    <property type="entry name" value="Class II aaRS and biotin synthetases"/>
    <property type="match status" value="1"/>
</dbReference>
<dbReference type="SUPFAM" id="SSF46589">
    <property type="entry name" value="tRNA-binding arm"/>
    <property type="match status" value="1"/>
</dbReference>
<dbReference type="PROSITE" id="PS50862">
    <property type="entry name" value="AA_TRNA_LIGASE_II"/>
    <property type="match status" value="1"/>
</dbReference>
<accession>Q1J594</accession>
<protein>
    <recommendedName>
        <fullName evidence="1">Serine--tRNA ligase</fullName>
        <ecNumber evidence="1">6.1.1.11</ecNumber>
    </recommendedName>
    <alternativeName>
        <fullName evidence="1">Seryl-tRNA synthetase</fullName>
        <shortName evidence="1">SerRS</shortName>
    </alternativeName>
    <alternativeName>
        <fullName evidence="1">Seryl-tRNA(Ser/Sec) synthetase</fullName>
    </alternativeName>
</protein>
<reference key="1">
    <citation type="journal article" date="2006" name="Proc. Natl. Acad. Sci. U.S.A.">
        <title>Molecular genetic anatomy of inter- and intraserotype variation in the human bacterial pathogen group A Streptococcus.</title>
        <authorList>
            <person name="Beres S.B."/>
            <person name="Richter E.W."/>
            <person name="Nagiec M.J."/>
            <person name="Sumby P."/>
            <person name="Porcella S.F."/>
            <person name="DeLeo F.R."/>
            <person name="Musser J.M."/>
        </authorList>
    </citation>
    <scope>NUCLEOTIDE SEQUENCE [LARGE SCALE GENOMIC DNA]</scope>
    <source>
        <strain>MGAS10750</strain>
    </source>
</reference>
<organism>
    <name type="scientific">Streptococcus pyogenes serotype M4 (strain MGAS10750)</name>
    <dbReference type="NCBI Taxonomy" id="370554"/>
    <lineage>
        <taxon>Bacteria</taxon>
        <taxon>Bacillati</taxon>
        <taxon>Bacillota</taxon>
        <taxon>Bacilli</taxon>
        <taxon>Lactobacillales</taxon>
        <taxon>Streptococcaceae</taxon>
        <taxon>Streptococcus</taxon>
    </lineage>
</organism>
<name>SYS_STRPF</name>
<evidence type="ECO:0000255" key="1">
    <source>
        <dbReference type="HAMAP-Rule" id="MF_00176"/>
    </source>
</evidence>
<keyword id="KW-0030">Aminoacyl-tRNA synthetase</keyword>
<keyword id="KW-0067">ATP-binding</keyword>
<keyword id="KW-0963">Cytoplasm</keyword>
<keyword id="KW-0436">Ligase</keyword>
<keyword id="KW-0547">Nucleotide-binding</keyword>
<keyword id="KW-0648">Protein biosynthesis</keyword>
<comment type="function">
    <text evidence="1">Catalyzes the attachment of serine to tRNA(Ser). Is also able to aminoacylate tRNA(Sec) with serine, to form the misacylated tRNA L-seryl-tRNA(Sec), which will be further converted into selenocysteinyl-tRNA(Sec).</text>
</comment>
<comment type="catalytic activity">
    <reaction evidence="1">
        <text>tRNA(Ser) + L-serine + ATP = L-seryl-tRNA(Ser) + AMP + diphosphate + H(+)</text>
        <dbReference type="Rhea" id="RHEA:12292"/>
        <dbReference type="Rhea" id="RHEA-COMP:9669"/>
        <dbReference type="Rhea" id="RHEA-COMP:9703"/>
        <dbReference type="ChEBI" id="CHEBI:15378"/>
        <dbReference type="ChEBI" id="CHEBI:30616"/>
        <dbReference type="ChEBI" id="CHEBI:33019"/>
        <dbReference type="ChEBI" id="CHEBI:33384"/>
        <dbReference type="ChEBI" id="CHEBI:78442"/>
        <dbReference type="ChEBI" id="CHEBI:78533"/>
        <dbReference type="ChEBI" id="CHEBI:456215"/>
        <dbReference type="EC" id="6.1.1.11"/>
    </reaction>
</comment>
<comment type="catalytic activity">
    <reaction evidence="1">
        <text>tRNA(Sec) + L-serine + ATP = L-seryl-tRNA(Sec) + AMP + diphosphate + H(+)</text>
        <dbReference type="Rhea" id="RHEA:42580"/>
        <dbReference type="Rhea" id="RHEA-COMP:9742"/>
        <dbReference type="Rhea" id="RHEA-COMP:10128"/>
        <dbReference type="ChEBI" id="CHEBI:15378"/>
        <dbReference type="ChEBI" id="CHEBI:30616"/>
        <dbReference type="ChEBI" id="CHEBI:33019"/>
        <dbReference type="ChEBI" id="CHEBI:33384"/>
        <dbReference type="ChEBI" id="CHEBI:78442"/>
        <dbReference type="ChEBI" id="CHEBI:78533"/>
        <dbReference type="ChEBI" id="CHEBI:456215"/>
        <dbReference type="EC" id="6.1.1.11"/>
    </reaction>
</comment>
<comment type="pathway">
    <text evidence="1">Aminoacyl-tRNA biosynthesis; selenocysteinyl-tRNA(Sec) biosynthesis; L-seryl-tRNA(Sec) from L-serine and tRNA(Sec): step 1/1.</text>
</comment>
<comment type="subunit">
    <text evidence="1">Homodimer. The tRNA molecule binds across the dimer.</text>
</comment>
<comment type="subcellular location">
    <subcellularLocation>
        <location evidence="1">Cytoplasm</location>
    </subcellularLocation>
</comment>
<comment type="domain">
    <text evidence="1">Consists of two distinct domains, a catalytic core and a N-terminal extension that is involved in tRNA binding.</text>
</comment>
<comment type="similarity">
    <text evidence="1">Belongs to the class-II aminoacyl-tRNA synthetase family. Type-1 seryl-tRNA synthetase subfamily.</text>
</comment>
<feature type="chain" id="PRO_1000019840" description="Serine--tRNA ligase">
    <location>
        <begin position="1"/>
        <end position="425"/>
    </location>
</feature>
<feature type="binding site" evidence="1">
    <location>
        <begin position="230"/>
        <end position="232"/>
    </location>
    <ligand>
        <name>L-serine</name>
        <dbReference type="ChEBI" id="CHEBI:33384"/>
    </ligand>
</feature>
<feature type="binding site" evidence="1">
    <location>
        <begin position="261"/>
        <end position="263"/>
    </location>
    <ligand>
        <name>ATP</name>
        <dbReference type="ChEBI" id="CHEBI:30616"/>
    </ligand>
</feature>
<feature type="binding site" evidence="1">
    <location>
        <position position="284"/>
    </location>
    <ligand>
        <name>L-serine</name>
        <dbReference type="ChEBI" id="CHEBI:33384"/>
    </ligand>
</feature>
<feature type="binding site" evidence="1">
    <location>
        <begin position="348"/>
        <end position="351"/>
    </location>
    <ligand>
        <name>ATP</name>
        <dbReference type="ChEBI" id="CHEBI:30616"/>
    </ligand>
</feature>
<feature type="binding site" evidence="1">
    <location>
        <position position="384"/>
    </location>
    <ligand>
        <name>L-serine</name>
        <dbReference type="ChEBI" id="CHEBI:33384"/>
    </ligand>
</feature>
<proteinExistence type="inferred from homology"/>